<dbReference type="EC" id="3.6.1.-"/>
<dbReference type="EMBL" id="CR857768">
    <property type="protein sequence ID" value="CAH90033.1"/>
    <property type="molecule type" value="mRNA"/>
</dbReference>
<dbReference type="RefSeq" id="NP_001127227.1">
    <property type="nucleotide sequence ID" value="NM_001133755.1"/>
</dbReference>
<dbReference type="SMR" id="Q5RDX4"/>
<dbReference type="STRING" id="9601.ENSPPYP00000021158"/>
<dbReference type="GeneID" id="100174282"/>
<dbReference type="KEGG" id="pon:100174282"/>
<dbReference type="CTD" id="29028"/>
<dbReference type="eggNOG" id="KOG0732">
    <property type="taxonomic scope" value="Eukaryota"/>
</dbReference>
<dbReference type="InParanoid" id="Q5RDX4"/>
<dbReference type="OrthoDB" id="5421at2759"/>
<dbReference type="Proteomes" id="UP000001595">
    <property type="component" value="Unplaced"/>
</dbReference>
<dbReference type="GO" id="GO:0005634">
    <property type="term" value="C:nucleus"/>
    <property type="evidence" value="ECO:0007669"/>
    <property type="project" value="UniProtKB-SubCell"/>
</dbReference>
<dbReference type="GO" id="GO:0005524">
    <property type="term" value="F:ATP binding"/>
    <property type="evidence" value="ECO:0007669"/>
    <property type="project" value="UniProtKB-KW"/>
</dbReference>
<dbReference type="GO" id="GO:0016887">
    <property type="term" value="F:ATP hydrolysis activity"/>
    <property type="evidence" value="ECO:0007669"/>
    <property type="project" value="InterPro"/>
</dbReference>
<dbReference type="GO" id="GO:0003682">
    <property type="term" value="F:chromatin binding"/>
    <property type="evidence" value="ECO:0007669"/>
    <property type="project" value="TreeGrafter"/>
</dbReference>
<dbReference type="GO" id="GO:0042393">
    <property type="term" value="F:histone binding"/>
    <property type="evidence" value="ECO:0007669"/>
    <property type="project" value="TreeGrafter"/>
</dbReference>
<dbReference type="GO" id="GO:0006334">
    <property type="term" value="P:nucleosome assembly"/>
    <property type="evidence" value="ECO:0007669"/>
    <property type="project" value="TreeGrafter"/>
</dbReference>
<dbReference type="GO" id="GO:0006337">
    <property type="term" value="P:nucleosome disassembly"/>
    <property type="evidence" value="ECO:0007669"/>
    <property type="project" value="TreeGrafter"/>
</dbReference>
<dbReference type="GO" id="GO:0045815">
    <property type="term" value="P:transcription initiation-coupled chromatin remodeling"/>
    <property type="evidence" value="ECO:0007669"/>
    <property type="project" value="TreeGrafter"/>
</dbReference>
<dbReference type="CDD" id="cd05528">
    <property type="entry name" value="Bromo_AAA"/>
    <property type="match status" value="1"/>
</dbReference>
<dbReference type="CDD" id="cd19517">
    <property type="entry name" value="RecA-like_Yta7-like"/>
    <property type="match status" value="1"/>
</dbReference>
<dbReference type="FunFam" id="1.20.920.10:FF:000021">
    <property type="entry name" value="ATPase family AAA domain-containing protein 2"/>
    <property type="match status" value="1"/>
</dbReference>
<dbReference type="FunFam" id="1.10.8.60:FF:000016">
    <property type="entry name" value="ATPase family AAA domain-containing protein 2B"/>
    <property type="match status" value="1"/>
</dbReference>
<dbReference type="FunFam" id="3.40.50.300:FF:000734">
    <property type="entry name" value="ATPase family, AAA domain containing 2"/>
    <property type="match status" value="1"/>
</dbReference>
<dbReference type="FunFam" id="3.40.50.300:FF:000061">
    <property type="entry name" value="ATPase family, AAA domain-containing 2"/>
    <property type="match status" value="1"/>
</dbReference>
<dbReference type="Gene3D" id="1.10.8.60">
    <property type="match status" value="1"/>
</dbReference>
<dbReference type="Gene3D" id="1.20.920.10">
    <property type="entry name" value="Bromodomain-like"/>
    <property type="match status" value="1"/>
</dbReference>
<dbReference type="Gene3D" id="3.40.50.300">
    <property type="entry name" value="P-loop containing nucleotide triphosphate hydrolases"/>
    <property type="match status" value="2"/>
</dbReference>
<dbReference type="InterPro" id="IPR003593">
    <property type="entry name" value="AAA+_ATPase"/>
</dbReference>
<dbReference type="InterPro" id="IPR041569">
    <property type="entry name" value="AAA_lid_3"/>
</dbReference>
<dbReference type="InterPro" id="IPR045199">
    <property type="entry name" value="ATAD2-like"/>
</dbReference>
<dbReference type="InterPro" id="IPR003959">
    <property type="entry name" value="ATPase_AAA_core"/>
</dbReference>
<dbReference type="InterPro" id="IPR003960">
    <property type="entry name" value="ATPase_AAA_CS"/>
</dbReference>
<dbReference type="InterPro" id="IPR001487">
    <property type="entry name" value="Bromodomain"/>
</dbReference>
<dbReference type="InterPro" id="IPR036427">
    <property type="entry name" value="Bromodomain-like_sf"/>
</dbReference>
<dbReference type="InterPro" id="IPR027417">
    <property type="entry name" value="P-loop_NTPase"/>
</dbReference>
<dbReference type="PANTHER" id="PTHR23069">
    <property type="entry name" value="AAA DOMAIN-CONTAINING"/>
    <property type="match status" value="1"/>
</dbReference>
<dbReference type="PANTHER" id="PTHR23069:SF4">
    <property type="entry name" value="ATPASE FAMILY AAA DOMAIN-CONTAINING PROTEIN 2"/>
    <property type="match status" value="1"/>
</dbReference>
<dbReference type="Pfam" id="PF00004">
    <property type="entry name" value="AAA"/>
    <property type="match status" value="1"/>
</dbReference>
<dbReference type="Pfam" id="PF17862">
    <property type="entry name" value="AAA_lid_3"/>
    <property type="match status" value="1"/>
</dbReference>
<dbReference type="Pfam" id="PF00439">
    <property type="entry name" value="Bromodomain"/>
    <property type="match status" value="1"/>
</dbReference>
<dbReference type="PRINTS" id="PR00503">
    <property type="entry name" value="BROMODOMAIN"/>
</dbReference>
<dbReference type="SMART" id="SM00382">
    <property type="entry name" value="AAA"/>
    <property type="match status" value="1"/>
</dbReference>
<dbReference type="SMART" id="SM00297">
    <property type="entry name" value="BROMO"/>
    <property type="match status" value="1"/>
</dbReference>
<dbReference type="SUPFAM" id="SSF47370">
    <property type="entry name" value="Bromodomain"/>
    <property type="match status" value="1"/>
</dbReference>
<dbReference type="SUPFAM" id="SSF52540">
    <property type="entry name" value="P-loop containing nucleoside triphosphate hydrolases"/>
    <property type="match status" value="2"/>
</dbReference>
<dbReference type="PROSITE" id="PS00674">
    <property type="entry name" value="AAA"/>
    <property type="match status" value="1"/>
</dbReference>
<dbReference type="PROSITE" id="PS50014">
    <property type="entry name" value="BROMODOMAIN_2"/>
    <property type="match status" value="1"/>
</dbReference>
<evidence type="ECO:0000250" key="1"/>
<evidence type="ECO:0000250" key="2">
    <source>
        <dbReference type="UniProtKB" id="Q6PL18"/>
    </source>
</evidence>
<evidence type="ECO:0000255" key="3"/>
<evidence type="ECO:0000255" key="4">
    <source>
        <dbReference type="PROSITE-ProRule" id="PRU00035"/>
    </source>
</evidence>
<evidence type="ECO:0000256" key="5">
    <source>
        <dbReference type="SAM" id="MobiDB-lite"/>
    </source>
</evidence>
<evidence type="ECO:0000305" key="6"/>
<proteinExistence type="evidence at transcript level"/>
<protein>
    <recommendedName>
        <fullName>ATPase family AAA domain-containing protein 2</fullName>
        <ecNumber>3.6.1.-</ecNumber>
    </recommendedName>
</protein>
<comment type="function">
    <text evidence="1">May be a transcriptional coactivator of the nuclear receptor ESR1 required to induce the expression of a subset of estradiol target genes, such as CCND1, MYC and E2F1. May play a role in the recruitment or occupancy of CREBBP at some ESR1 target gene promoters. May be required for histone hyperacetylation (By similarity).</text>
</comment>
<comment type="catalytic activity">
    <reaction>
        <text>ATP + H2O = ADP + phosphate + H(+)</text>
        <dbReference type="Rhea" id="RHEA:13065"/>
        <dbReference type="ChEBI" id="CHEBI:15377"/>
        <dbReference type="ChEBI" id="CHEBI:15378"/>
        <dbReference type="ChEBI" id="CHEBI:30616"/>
        <dbReference type="ChEBI" id="CHEBI:43474"/>
        <dbReference type="ChEBI" id="CHEBI:456216"/>
    </reaction>
</comment>
<comment type="subunit">
    <text evidence="1">Interaction with ESR1 and NCOA3 is enhanced by estradiol. Interacts with acetylated lysine residues on histone H1.4, H2A, H2B and H3 (in vitro) (By similarity).</text>
</comment>
<comment type="subcellular location">
    <subcellularLocation>
        <location evidence="1">Nucleus</location>
    </subcellularLocation>
</comment>
<comment type="similarity">
    <text evidence="6">Belongs to the AAA ATPase family.</text>
</comment>
<gene>
    <name type="primary">ATAD2</name>
</gene>
<name>ATAD2_PONAB</name>
<reference key="1">
    <citation type="submission" date="2004-11" db="EMBL/GenBank/DDBJ databases">
        <authorList>
            <consortium name="The German cDNA consortium"/>
        </authorList>
    </citation>
    <scope>NUCLEOTIDE SEQUENCE [LARGE SCALE MRNA]</scope>
    <source>
        <tissue>Kidney</tissue>
    </source>
</reference>
<keyword id="KW-0010">Activator</keyword>
<keyword id="KW-0067">ATP-binding</keyword>
<keyword id="KW-0103">Bromodomain</keyword>
<keyword id="KW-0175">Coiled coil</keyword>
<keyword id="KW-0378">Hydrolase</keyword>
<keyword id="KW-1017">Isopeptide bond</keyword>
<keyword id="KW-0547">Nucleotide-binding</keyword>
<keyword id="KW-0539">Nucleus</keyword>
<keyword id="KW-0597">Phosphoprotein</keyword>
<keyword id="KW-1185">Reference proteome</keyword>
<keyword id="KW-0804">Transcription</keyword>
<keyword id="KW-0805">Transcription regulation</keyword>
<keyword id="KW-0832">Ubl conjugation</keyword>
<sequence>MLFDKLITNTAEAVLQKMDDMKKMRRQRMRELEDLGVFNETEESNLNMYTRGKQKDIQRTDEETTDNQEGSVESSEEGEDQEHEDDGEDEDDEDEDDDDDDDDDDDDDEDDEDEEDGEEDNQKRYYLRQRKATVYYQAPLEKPRHQRKPNIFYSGPASPARPRYRLSSAGPRSPYCKRMNRRRHAIHSSDSTSSSSSEDEQHFERRRKRSRNRAINRYLPLNFRKDELKGIYKDRMKIGASLADVDPMQLDSSVRFDSVGGLSNHIAALKEMVVFPLLYPEVFEKFKIQPPRGCLFYGPPGTGKTLVARALANECSQGDKRVAFFMRKGADCLSKWVGESERQLRLLFDQAYQMRPSIIFFDEIDGLAPVRSSRQDQIHSSIVSTLLALMDGLDSRGEIVVIGATNRLDAIDPALRRPGRFDREFLFSLPDKEARKEILKIHTRDWNPKPLDTFLEELAENCVGYRGADIKSICAEAALCALRRRYPQIYTTSEKLQLDLSSINISAKDFEVAMQKMIPASQRAVTSPGQALSTVVKPLLQNTVDKILEALQRVFPHAEFRTNKTLDSDISCPLLESDLAYSDDDVPSVYENGLSQKSSHKAKDNFNFLHLNRNACYQPMSFRPRILIVGEPGFGQGSHLAPAVIHALEKFTVYTLDIPVLFGVSATSPEETCAQVIREAKRTAPSIVYVPHIHVWWEIVGPTLKATFTTLLQNIPSFAPVLLLATSDKSHSALPEEVQELFIRDYGEIFNVQLPGKEERTKFFEDLILKQAAKPPISKKKAVLQALEVLPVAPPPEPRSLTAEEVKRLEEQEEDTFRELRIFLRNVTHRLAIDKRFRVFTKPVDPDEVPDYVTVIKQPMDLSSVISKIDLHKYLTVKDYLRDIDLICSNALEYNPDRDPGDRLIRHRACALRDTAYAIIKEELDEDFEQLCEEIQESRKKRGCSSSKYAPSYYHVMPKQNSTLVGDKRSDPEQNEKLKTPSTPVACSTPEMCVLRMTRARRSQVEQQQLISVEKALAILSQPTPSLVVDHERLKNLLKTVVKKSRNYNIFQLENLYAVISQCIYQHRKDYDKTSLIQKMEQEVENFSCSR</sequence>
<accession>Q5RDX4</accession>
<organism>
    <name type="scientific">Pongo abelii</name>
    <name type="common">Sumatran orangutan</name>
    <name type="synonym">Pongo pygmaeus abelii</name>
    <dbReference type="NCBI Taxonomy" id="9601"/>
    <lineage>
        <taxon>Eukaryota</taxon>
        <taxon>Metazoa</taxon>
        <taxon>Chordata</taxon>
        <taxon>Craniata</taxon>
        <taxon>Vertebrata</taxon>
        <taxon>Euteleostomi</taxon>
        <taxon>Mammalia</taxon>
        <taxon>Eutheria</taxon>
        <taxon>Euarchontoglires</taxon>
        <taxon>Primates</taxon>
        <taxon>Haplorrhini</taxon>
        <taxon>Catarrhini</taxon>
        <taxon>Hominidae</taxon>
        <taxon>Pongo</taxon>
    </lineage>
</organism>
<feature type="chain" id="PRO_0000084798" description="ATPase family AAA domain-containing protein 2">
    <location>
        <begin position="1"/>
        <end position="1091"/>
    </location>
</feature>
<feature type="domain" description="Bromo" evidence="4">
    <location>
        <begin position="811"/>
        <end position="923"/>
    </location>
</feature>
<feature type="region of interest" description="Disordered" evidence="5">
    <location>
        <begin position="32"/>
        <end position="211"/>
    </location>
</feature>
<feature type="region of interest" description="Disordered" evidence="5">
    <location>
        <begin position="961"/>
        <end position="985"/>
    </location>
</feature>
<feature type="coiled-coil region" evidence="3">
    <location>
        <begin position="801"/>
        <end position="825"/>
    </location>
</feature>
<feature type="coiled-coil region" evidence="3">
    <location>
        <begin position="917"/>
        <end position="943"/>
    </location>
</feature>
<feature type="compositionally biased region" description="Basic and acidic residues" evidence="5">
    <location>
        <begin position="53"/>
        <end position="62"/>
    </location>
</feature>
<feature type="compositionally biased region" description="Acidic residues" evidence="5">
    <location>
        <begin position="74"/>
        <end position="119"/>
    </location>
</feature>
<feature type="compositionally biased region" description="Basic and acidic residues" evidence="5">
    <location>
        <begin position="966"/>
        <end position="979"/>
    </location>
</feature>
<feature type="binding site" evidence="3">
    <location>
        <begin position="298"/>
        <end position="305"/>
    </location>
    <ligand>
        <name>ATP</name>
        <dbReference type="ChEBI" id="CHEBI:30616"/>
    </ligand>
</feature>
<feature type="modified residue" description="Phosphoserine" evidence="2">
    <location>
        <position position="158"/>
    </location>
</feature>
<feature type="modified residue" description="Phosphoserine" evidence="2">
    <location>
        <position position="168"/>
    </location>
</feature>
<feature type="modified residue" description="Phosphoserine" evidence="2">
    <location>
        <position position="173"/>
    </location>
</feature>
<feature type="modified residue" description="Phosphoserine" evidence="2">
    <location>
        <position position="241"/>
    </location>
</feature>
<feature type="modified residue" description="Phosphoserine" evidence="2">
    <location>
        <position position="577"/>
    </location>
</feature>
<feature type="modified residue" description="Phosphoserine" evidence="2">
    <location>
        <position position="582"/>
    </location>
</feature>
<feature type="modified residue" description="Phosphoserine" evidence="2">
    <location>
        <position position="970"/>
    </location>
</feature>
<feature type="modified residue" description="Phosphothreonine" evidence="2">
    <location>
        <position position="980"/>
    </location>
</feature>
<feature type="modified residue" description="Phosphothreonine" evidence="2">
    <location>
        <position position="983"/>
    </location>
</feature>
<feature type="modified residue" description="Phosphoserine" evidence="2">
    <location>
        <position position="1003"/>
    </location>
</feature>
<feature type="modified residue" description="Phosphothreonine" evidence="2">
    <location>
        <position position="1024"/>
    </location>
</feature>
<feature type="cross-link" description="Glycyl lysine isopeptide (Lys-Gly) (interchain with G-Cter in SUMO2)" evidence="2">
    <location>
        <position position="148"/>
    </location>
</feature>
<feature type="cross-link" description="Glycyl lysine isopeptide (Lys-Gly) (interchain with G-Cter in SUMO2)" evidence="2">
    <location>
        <position position="959"/>
    </location>
</feature>
<feature type="cross-link" description="Glycyl lysine isopeptide (Lys-Gly) (interchain with G-Cter in SUMO2)" evidence="2">
    <location>
        <position position="979"/>
    </location>
</feature>